<organism>
    <name type="scientific">Ralstonia nicotianae (strain ATCC BAA-1114 / GMI1000)</name>
    <name type="common">Ralstonia solanacearum</name>
    <dbReference type="NCBI Taxonomy" id="267608"/>
    <lineage>
        <taxon>Bacteria</taxon>
        <taxon>Pseudomonadati</taxon>
        <taxon>Pseudomonadota</taxon>
        <taxon>Betaproteobacteria</taxon>
        <taxon>Burkholderiales</taxon>
        <taxon>Burkholderiaceae</taxon>
        <taxon>Ralstonia</taxon>
        <taxon>Ralstonia solanacearum species complex</taxon>
    </lineage>
</organism>
<name>HIS7_RALN1</name>
<proteinExistence type="inferred from homology"/>
<feature type="chain" id="PRO_0000158159" description="Imidazoleglycerol-phosphate dehydratase">
    <location>
        <begin position="1"/>
        <end position="196"/>
    </location>
</feature>
<keyword id="KW-0028">Amino-acid biosynthesis</keyword>
<keyword id="KW-0963">Cytoplasm</keyword>
<keyword id="KW-0368">Histidine biosynthesis</keyword>
<keyword id="KW-0456">Lyase</keyword>
<keyword id="KW-1185">Reference proteome</keyword>
<accession>Q8XV81</accession>
<evidence type="ECO:0000255" key="1">
    <source>
        <dbReference type="HAMAP-Rule" id="MF_00076"/>
    </source>
</evidence>
<reference key="1">
    <citation type="journal article" date="2002" name="Nature">
        <title>Genome sequence of the plant pathogen Ralstonia solanacearum.</title>
        <authorList>
            <person name="Salanoubat M."/>
            <person name="Genin S."/>
            <person name="Artiguenave F."/>
            <person name="Gouzy J."/>
            <person name="Mangenot S."/>
            <person name="Arlat M."/>
            <person name="Billault A."/>
            <person name="Brottier P."/>
            <person name="Camus J.-C."/>
            <person name="Cattolico L."/>
            <person name="Chandler M."/>
            <person name="Choisne N."/>
            <person name="Claudel-Renard C."/>
            <person name="Cunnac S."/>
            <person name="Demange N."/>
            <person name="Gaspin C."/>
            <person name="Lavie M."/>
            <person name="Moisan A."/>
            <person name="Robert C."/>
            <person name="Saurin W."/>
            <person name="Schiex T."/>
            <person name="Siguier P."/>
            <person name="Thebault P."/>
            <person name="Whalen M."/>
            <person name="Wincker P."/>
            <person name="Levy M."/>
            <person name="Weissenbach J."/>
            <person name="Boucher C.A."/>
        </authorList>
    </citation>
    <scope>NUCLEOTIDE SEQUENCE [LARGE SCALE GENOMIC DNA]</scope>
    <source>
        <strain>ATCC BAA-1114 / GMI1000</strain>
    </source>
</reference>
<comment type="catalytic activity">
    <reaction evidence="1">
        <text>D-erythro-1-(imidazol-4-yl)glycerol 3-phosphate = 3-(imidazol-4-yl)-2-oxopropyl phosphate + H2O</text>
        <dbReference type="Rhea" id="RHEA:11040"/>
        <dbReference type="ChEBI" id="CHEBI:15377"/>
        <dbReference type="ChEBI" id="CHEBI:57766"/>
        <dbReference type="ChEBI" id="CHEBI:58278"/>
        <dbReference type="EC" id="4.2.1.19"/>
    </reaction>
</comment>
<comment type="pathway">
    <text evidence="1">Amino-acid biosynthesis; L-histidine biosynthesis; L-histidine from 5-phospho-alpha-D-ribose 1-diphosphate: step 6/9.</text>
</comment>
<comment type="subcellular location">
    <subcellularLocation>
        <location evidence="1">Cytoplasm</location>
    </subcellularLocation>
</comment>
<comment type="similarity">
    <text evidence="1">Belongs to the imidazoleglycerol-phosphate dehydratase family.</text>
</comment>
<sequence>MSRRAEVTRNTSETQIRVALDLDGTGKQTLNTGVPFLDHMLDQIARHGMVDLDVTATGDTHIDDHHTVEDVGITLGQAVAKAIGDKKGIVRYGHSYVPLDEALSRVVIDFSGRPGLEFHVPFTRARVGSFDVDLSIEFFRGFVNHAGVTLHIDNLRGVNAHHQIETVFKAFGRALRMAVEIDPRAAGTIPSTKGAL</sequence>
<dbReference type="EC" id="4.2.1.19" evidence="1"/>
<dbReference type="EMBL" id="AL646052">
    <property type="protein sequence ID" value="CAD16657.1"/>
    <property type="molecule type" value="Genomic_DNA"/>
</dbReference>
<dbReference type="RefSeq" id="WP_011002855.1">
    <property type="nucleotide sequence ID" value="NC_003295.1"/>
</dbReference>
<dbReference type="SMR" id="Q8XV81"/>
<dbReference type="STRING" id="267608.RSc2950"/>
<dbReference type="EnsemblBacteria" id="CAD16657">
    <property type="protein sequence ID" value="CAD16657"/>
    <property type="gene ID" value="RSc2950"/>
</dbReference>
<dbReference type="GeneID" id="93851249"/>
<dbReference type="KEGG" id="rso:RSc2950"/>
<dbReference type="eggNOG" id="COG0131">
    <property type="taxonomic scope" value="Bacteria"/>
</dbReference>
<dbReference type="HOGENOM" id="CLU_044308_2_0_4"/>
<dbReference type="UniPathway" id="UPA00031">
    <property type="reaction ID" value="UER00011"/>
</dbReference>
<dbReference type="Proteomes" id="UP000001436">
    <property type="component" value="Chromosome"/>
</dbReference>
<dbReference type="GO" id="GO:0005737">
    <property type="term" value="C:cytoplasm"/>
    <property type="evidence" value="ECO:0007669"/>
    <property type="project" value="UniProtKB-SubCell"/>
</dbReference>
<dbReference type="GO" id="GO:0004424">
    <property type="term" value="F:imidazoleglycerol-phosphate dehydratase activity"/>
    <property type="evidence" value="ECO:0007669"/>
    <property type="project" value="UniProtKB-UniRule"/>
</dbReference>
<dbReference type="GO" id="GO:0000105">
    <property type="term" value="P:L-histidine biosynthetic process"/>
    <property type="evidence" value="ECO:0007669"/>
    <property type="project" value="UniProtKB-UniRule"/>
</dbReference>
<dbReference type="CDD" id="cd07914">
    <property type="entry name" value="IGPD"/>
    <property type="match status" value="1"/>
</dbReference>
<dbReference type="FunFam" id="3.30.230.40:FF:000002">
    <property type="entry name" value="Imidazoleglycerol-phosphate dehydratase"/>
    <property type="match status" value="1"/>
</dbReference>
<dbReference type="FunFam" id="3.30.230.40:FF:000003">
    <property type="entry name" value="Imidazoleglycerol-phosphate dehydratase HisB"/>
    <property type="match status" value="1"/>
</dbReference>
<dbReference type="Gene3D" id="3.30.230.40">
    <property type="entry name" value="Imidazole glycerol phosphate dehydratase, domain 1"/>
    <property type="match status" value="2"/>
</dbReference>
<dbReference type="HAMAP" id="MF_00076">
    <property type="entry name" value="HisB"/>
    <property type="match status" value="1"/>
</dbReference>
<dbReference type="InterPro" id="IPR038494">
    <property type="entry name" value="IGPD_sf"/>
</dbReference>
<dbReference type="InterPro" id="IPR000807">
    <property type="entry name" value="ImidazoleglycerolP_deHydtase"/>
</dbReference>
<dbReference type="InterPro" id="IPR020565">
    <property type="entry name" value="ImidazoleglycerP_deHydtase_CS"/>
</dbReference>
<dbReference type="InterPro" id="IPR020568">
    <property type="entry name" value="Ribosomal_Su5_D2-typ_SF"/>
</dbReference>
<dbReference type="NCBIfam" id="NF002106">
    <property type="entry name" value="PRK00951.1-1"/>
    <property type="match status" value="1"/>
</dbReference>
<dbReference type="NCBIfam" id="NF002109">
    <property type="entry name" value="PRK00951.1-5"/>
    <property type="match status" value="1"/>
</dbReference>
<dbReference type="NCBIfam" id="NF002111">
    <property type="entry name" value="PRK00951.2-1"/>
    <property type="match status" value="1"/>
</dbReference>
<dbReference type="NCBIfam" id="NF002114">
    <property type="entry name" value="PRK00951.2-4"/>
    <property type="match status" value="1"/>
</dbReference>
<dbReference type="PANTHER" id="PTHR23133:SF2">
    <property type="entry name" value="IMIDAZOLEGLYCEROL-PHOSPHATE DEHYDRATASE"/>
    <property type="match status" value="1"/>
</dbReference>
<dbReference type="PANTHER" id="PTHR23133">
    <property type="entry name" value="IMIDAZOLEGLYCEROL-PHOSPHATE DEHYDRATASE HIS7"/>
    <property type="match status" value="1"/>
</dbReference>
<dbReference type="Pfam" id="PF00475">
    <property type="entry name" value="IGPD"/>
    <property type="match status" value="1"/>
</dbReference>
<dbReference type="SUPFAM" id="SSF54211">
    <property type="entry name" value="Ribosomal protein S5 domain 2-like"/>
    <property type="match status" value="2"/>
</dbReference>
<dbReference type="PROSITE" id="PS00954">
    <property type="entry name" value="IGP_DEHYDRATASE_1"/>
    <property type="match status" value="1"/>
</dbReference>
<dbReference type="PROSITE" id="PS00955">
    <property type="entry name" value="IGP_DEHYDRATASE_2"/>
    <property type="match status" value="1"/>
</dbReference>
<gene>
    <name evidence="1" type="primary">hisB</name>
    <name type="ordered locus">RSc2950</name>
    <name type="ORF">RS00136</name>
</gene>
<protein>
    <recommendedName>
        <fullName evidence="1">Imidazoleglycerol-phosphate dehydratase</fullName>
        <shortName evidence="1">IGPD</shortName>
        <ecNumber evidence="1">4.2.1.19</ecNumber>
    </recommendedName>
</protein>